<keyword id="KW-0150">Chloroplast</keyword>
<keyword id="KW-0472">Membrane</keyword>
<keyword id="KW-0520">NAD</keyword>
<keyword id="KW-0521">NADP</keyword>
<keyword id="KW-0934">Plastid</keyword>
<keyword id="KW-0618">Plastoquinone</keyword>
<keyword id="KW-0874">Quinone</keyword>
<keyword id="KW-0793">Thylakoid</keyword>
<keyword id="KW-1278">Translocase</keyword>
<keyword id="KW-0812">Transmembrane</keyword>
<keyword id="KW-1133">Transmembrane helix</keyword>
<keyword id="KW-0813">Transport</keyword>
<sequence length="740" mass="83956">MEQTYEYAWIIPFIPLPVPMLIGAGLILFPTATKSFRRMWAFQSVLLLSIVMIFSIYLSIQQINSSSFYQYVWSWIINNDFSLDFGYLIDPLTSIMSILITTVGIMVLIYSDNYMAHDQGYLRFFAYMSFFSTSMLGLVTSSNLIQIYIFWELVGLCSYLLIGFWFTRPVAANACQKAFVTNRVGDFGLLLGILGFYWITGSFEFRDLFEIFNNLSSNNEVNFLFVTLCAVLLFAGAVAKSAQFPLHVWLPDAMEGPTPISALIHAATMVAAGIFLVARLLPLFRVIPYIMYLISVIGIITVLLGATLALAQKDIKRGLAYSTMSQLGYMMLALGMGSYRSALFHLITHAYSKALLFLGSGSIIHSMETIVGYSPAKSQNMGLMGGLRKHVPITQITFLLGTLSLCGIPPLACFWSKDEILNDSWLYSPIFAIIAWATAGLTAFYMFRIYLLTFEGHLNVHFQNYGGKQKTPFYSISLWGKKGVKKNSYLLTMNNNESTYFFSKTKYPIDKNGRKMTRPFMTIAHFEHKTVYSYPYESDNTMLFPIFVLGLFTLFVGSIGIPFNQEGVNLDILSKWLAPSINLLHQKSNNSMDWNEFLKDAVLSVSIAYFGIFLASFLYKPIYSSLKNFELINSFVKKGPKRILWDKIINGIYDWSYNRAYIDAFYTRFFVGGIRGLAEFIHFFDRRVIDGMTNGVGVISFIVGEGIKYIGGGRISSYLFLYLAYVSVFLLVYYLFFLTF</sequence>
<organism>
    <name type="scientific">Atropa belladonna</name>
    <name type="common">Belladonna</name>
    <name type="synonym">Deadly nightshade</name>
    <dbReference type="NCBI Taxonomy" id="33113"/>
    <lineage>
        <taxon>Eukaryota</taxon>
        <taxon>Viridiplantae</taxon>
        <taxon>Streptophyta</taxon>
        <taxon>Embryophyta</taxon>
        <taxon>Tracheophyta</taxon>
        <taxon>Spermatophyta</taxon>
        <taxon>Magnoliopsida</taxon>
        <taxon>eudicotyledons</taxon>
        <taxon>Gunneridae</taxon>
        <taxon>Pentapetalae</taxon>
        <taxon>asterids</taxon>
        <taxon>lamiids</taxon>
        <taxon>Solanales</taxon>
        <taxon>Solanaceae</taxon>
        <taxon>Solanoideae</taxon>
        <taxon>Hyoscyameae</taxon>
        <taxon>Atropa</taxon>
    </lineage>
</organism>
<accession>Q8S8V0</accession>
<accession>Q31773</accession>
<reference key="1">
    <citation type="journal article" date="2002" name="Mol. Biol. Evol.">
        <title>The plastid chromosome of Atropa belladonna and its comparison with that of Nicotiana tabacum: the role of RNA editing in generating divergence in the process of plant speciation.</title>
        <authorList>
            <person name="Schmitz-Linneweber C."/>
            <person name="Regel R."/>
            <person name="Du T.G."/>
            <person name="Hupfer H."/>
            <person name="Herrmann R.G."/>
            <person name="Maier R.M."/>
        </authorList>
    </citation>
    <scope>NUCLEOTIDE SEQUENCE [LARGE SCALE GENOMIC DNA]</scope>
    <source>
        <strain>cv. Ab5p(kan)</strain>
    </source>
</reference>
<reference key="2">
    <citation type="journal article" date="1994" name="Syst. Biol.">
        <title>Combining data in phylogenetic systematics: an empirical approach using three molecular data sets in the Solanaceae.</title>
        <authorList>
            <person name="Olmstead R.G."/>
            <person name="Sweere J.A."/>
        </authorList>
    </citation>
    <scope>NUCLEOTIDE SEQUENCE [GENOMIC DNA] OF 9-703</scope>
</reference>
<comment type="function">
    <text evidence="1">NDH shuttles electrons from NAD(P)H:plastoquinone, via FMN and iron-sulfur (Fe-S) centers, to quinones in the photosynthetic chain and possibly in a chloroplast respiratory chain. The immediate electron acceptor for the enzyme in this species is believed to be plastoquinone. Couples the redox reaction to proton translocation, and thus conserves the redox energy in a proton gradient (By similarity).</text>
</comment>
<comment type="catalytic activity">
    <reaction>
        <text>a plastoquinone + NADH + (n+1) H(+)(in) = a plastoquinol + NAD(+) + n H(+)(out)</text>
        <dbReference type="Rhea" id="RHEA:42608"/>
        <dbReference type="Rhea" id="RHEA-COMP:9561"/>
        <dbReference type="Rhea" id="RHEA-COMP:9562"/>
        <dbReference type="ChEBI" id="CHEBI:15378"/>
        <dbReference type="ChEBI" id="CHEBI:17757"/>
        <dbReference type="ChEBI" id="CHEBI:57540"/>
        <dbReference type="ChEBI" id="CHEBI:57945"/>
        <dbReference type="ChEBI" id="CHEBI:62192"/>
    </reaction>
</comment>
<comment type="catalytic activity">
    <reaction>
        <text>a plastoquinone + NADPH + (n+1) H(+)(in) = a plastoquinol + NADP(+) + n H(+)(out)</text>
        <dbReference type="Rhea" id="RHEA:42612"/>
        <dbReference type="Rhea" id="RHEA-COMP:9561"/>
        <dbReference type="Rhea" id="RHEA-COMP:9562"/>
        <dbReference type="ChEBI" id="CHEBI:15378"/>
        <dbReference type="ChEBI" id="CHEBI:17757"/>
        <dbReference type="ChEBI" id="CHEBI:57783"/>
        <dbReference type="ChEBI" id="CHEBI:58349"/>
        <dbReference type="ChEBI" id="CHEBI:62192"/>
    </reaction>
</comment>
<comment type="subunit">
    <text evidence="1">NDH is composed of at least 16 different subunits, 5 of which are encoded in the nucleus.</text>
</comment>
<comment type="subcellular location">
    <subcellularLocation>
        <location evidence="1">Plastid</location>
        <location evidence="1">Chloroplast thylakoid membrane</location>
        <topology evidence="1">Multi-pass membrane protein</topology>
    </subcellularLocation>
</comment>
<comment type="similarity">
    <text evidence="3">Belongs to the complex I subunit 5 family.</text>
</comment>
<evidence type="ECO:0000250" key="1"/>
<evidence type="ECO:0000255" key="2"/>
<evidence type="ECO:0000305" key="3"/>
<protein>
    <recommendedName>
        <fullName>NAD(P)H-quinone oxidoreductase subunit 5, chloroplastic</fullName>
        <ecNumber>7.1.1.-</ecNumber>
    </recommendedName>
    <alternativeName>
        <fullName>NAD(P)H dehydrogenase subunit 5</fullName>
    </alternativeName>
    <alternativeName>
        <fullName>NADH-plastoquinone oxidoreductase subunit 5</fullName>
    </alternativeName>
</protein>
<name>NU5C_ATRBE</name>
<geneLocation type="chloroplast"/>
<gene>
    <name type="primary">ndhF</name>
</gene>
<proteinExistence type="inferred from homology"/>
<dbReference type="EC" id="7.1.1.-"/>
<dbReference type="EMBL" id="AJ316582">
    <property type="protein sequence ID" value="CAC88093.1"/>
    <property type="molecule type" value="Genomic_DNA"/>
</dbReference>
<dbReference type="EMBL" id="U08915">
    <property type="protein sequence ID" value="AAA18597.2"/>
    <property type="molecule type" value="Genomic_DNA"/>
</dbReference>
<dbReference type="RefSeq" id="NP_783279.1">
    <property type="nucleotide sequence ID" value="NC_004561.1"/>
</dbReference>
<dbReference type="SMR" id="Q8S8V0"/>
<dbReference type="GeneID" id="806500"/>
<dbReference type="GO" id="GO:0009535">
    <property type="term" value="C:chloroplast thylakoid membrane"/>
    <property type="evidence" value="ECO:0007669"/>
    <property type="project" value="UniProtKB-SubCell"/>
</dbReference>
<dbReference type="GO" id="GO:0008137">
    <property type="term" value="F:NADH dehydrogenase (ubiquinone) activity"/>
    <property type="evidence" value="ECO:0007669"/>
    <property type="project" value="InterPro"/>
</dbReference>
<dbReference type="GO" id="GO:0048038">
    <property type="term" value="F:quinone binding"/>
    <property type="evidence" value="ECO:0007669"/>
    <property type="project" value="UniProtKB-KW"/>
</dbReference>
<dbReference type="GO" id="GO:0042773">
    <property type="term" value="P:ATP synthesis coupled electron transport"/>
    <property type="evidence" value="ECO:0007669"/>
    <property type="project" value="InterPro"/>
</dbReference>
<dbReference type="GO" id="GO:0015990">
    <property type="term" value="P:electron transport coupled proton transport"/>
    <property type="evidence" value="ECO:0007669"/>
    <property type="project" value="TreeGrafter"/>
</dbReference>
<dbReference type="Gene3D" id="1.20.5.2700">
    <property type="match status" value="1"/>
</dbReference>
<dbReference type="InterPro" id="IPR002128">
    <property type="entry name" value="NADH_UbQ_OxRdtase_chlpt_su5_C"/>
</dbReference>
<dbReference type="InterPro" id="IPR018393">
    <property type="entry name" value="NADHpl_OxRdtase_5_subgr"/>
</dbReference>
<dbReference type="InterPro" id="IPR001750">
    <property type="entry name" value="ND/Mrp_TM"/>
</dbReference>
<dbReference type="InterPro" id="IPR003945">
    <property type="entry name" value="NU5C-like"/>
</dbReference>
<dbReference type="InterPro" id="IPR001516">
    <property type="entry name" value="Proton_antipo_N"/>
</dbReference>
<dbReference type="NCBIfam" id="TIGR01974">
    <property type="entry name" value="NDH_I_L"/>
    <property type="match status" value="1"/>
</dbReference>
<dbReference type="NCBIfam" id="NF005141">
    <property type="entry name" value="PRK06590.1"/>
    <property type="match status" value="1"/>
</dbReference>
<dbReference type="PANTHER" id="PTHR42829">
    <property type="entry name" value="NADH-UBIQUINONE OXIDOREDUCTASE CHAIN 5"/>
    <property type="match status" value="1"/>
</dbReference>
<dbReference type="PANTHER" id="PTHR42829:SF2">
    <property type="entry name" value="NADH-UBIQUINONE OXIDOREDUCTASE CHAIN 5"/>
    <property type="match status" value="1"/>
</dbReference>
<dbReference type="Pfam" id="PF01010">
    <property type="entry name" value="Proton_antipo_C"/>
    <property type="match status" value="1"/>
</dbReference>
<dbReference type="Pfam" id="PF00361">
    <property type="entry name" value="Proton_antipo_M"/>
    <property type="match status" value="1"/>
</dbReference>
<dbReference type="Pfam" id="PF00662">
    <property type="entry name" value="Proton_antipo_N"/>
    <property type="match status" value="1"/>
</dbReference>
<dbReference type="PRINTS" id="PR01434">
    <property type="entry name" value="NADHDHGNASE5"/>
</dbReference>
<dbReference type="PRINTS" id="PR01435">
    <property type="entry name" value="NPOXDRDTASE5"/>
</dbReference>
<feature type="chain" id="PRO_0000118172" description="NAD(P)H-quinone oxidoreductase subunit 5, chloroplastic">
    <location>
        <begin position="1"/>
        <end position="740"/>
    </location>
</feature>
<feature type="transmembrane region" description="Helical" evidence="2">
    <location>
        <begin position="9"/>
        <end position="29"/>
    </location>
</feature>
<feature type="transmembrane region" description="Helical" evidence="2">
    <location>
        <begin position="40"/>
        <end position="60"/>
    </location>
</feature>
<feature type="transmembrane region" description="Helical" evidence="2">
    <location>
        <begin position="89"/>
        <end position="109"/>
    </location>
</feature>
<feature type="transmembrane region" description="Helical" evidence="2">
    <location>
        <begin position="125"/>
        <end position="145"/>
    </location>
</feature>
<feature type="transmembrane region" description="Helical" evidence="2">
    <location>
        <begin position="147"/>
        <end position="167"/>
    </location>
</feature>
<feature type="transmembrane region" description="Helical" evidence="2">
    <location>
        <begin position="185"/>
        <end position="205"/>
    </location>
</feature>
<feature type="transmembrane region" description="Helical" evidence="2">
    <location>
        <begin position="219"/>
        <end position="239"/>
    </location>
</feature>
<feature type="transmembrane region" description="Helical" evidence="2">
    <location>
        <begin position="258"/>
        <end position="278"/>
    </location>
</feature>
<feature type="transmembrane region" description="Helical" evidence="2">
    <location>
        <begin position="286"/>
        <end position="306"/>
    </location>
</feature>
<feature type="transmembrane region" description="Helical" evidence="2">
    <location>
        <begin position="327"/>
        <end position="347"/>
    </location>
</feature>
<feature type="transmembrane region" description="Helical" evidence="2">
    <location>
        <begin position="354"/>
        <end position="374"/>
    </location>
</feature>
<feature type="transmembrane region" description="Helical" evidence="2">
    <location>
        <begin position="396"/>
        <end position="416"/>
    </location>
</feature>
<feature type="transmembrane region" description="Helical" evidence="2">
    <location>
        <begin position="425"/>
        <end position="445"/>
    </location>
</feature>
<feature type="transmembrane region" description="Helical" evidence="2">
    <location>
        <begin position="543"/>
        <end position="563"/>
    </location>
</feature>
<feature type="transmembrane region" description="Helical" evidence="2">
    <location>
        <begin position="602"/>
        <end position="622"/>
    </location>
</feature>
<feature type="transmembrane region" description="Helical" evidence="2">
    <location>
        <begin position="718"/>
        <end position="738"/>
    </location>
</feature>
<feature type="sequence conflict" description="In Ref. 2; AAA18597." evidence="3" ref="2">
    <original>Q</original>
    <variation>Z</variation>
    <location>
        <position position="62"/>
    </location>
</feature>
<feature type="sequence conflict" description="In Ref. 2; AAA18597." evidence="3" ref="2">
    <original>V</original>
    <variation>W</variation>
    <location>
        <position position="568"/>
    </location>
</feature>
<feature type="sequence conflict" description="In Ref. 2; AAA18597." evidence="3" ref="2">
    <original>F</original>
    <variation>L</variation>
    <location>
        <position position="670"/>
    </location>
</feature>
<feature type="sequence conflict" description="In Ref. 2; AAA18597." evidence="3" ref="2">
    <original>I</original>
    <variation>L</variation>
    <location>
        <position position="674"/>
    </location>
</feature>